<reference key="1">
    <citation type="journal article" date="2001" name="Nucleic Acids Res.">
        <title>The complete genome sequence of the murine respiratory pathogen Mycoplasma pulmonis.</title>
        <authorList>
            <person name="Chambaud I."/>
            <person name="Heilig R."/>
            <person name="Ferris S."/>
            <person name="Barbe V."/>
            <person name="Samson D."/>
            <person name="Galisson F."/>
            <person name="Moszer I."/>
            <person name="Dybvig K."/>
            <person name="Wroblewski H."/>
            <person name="Viari A."/>
            <person name="Rocha E.P.C."/>
            <person name="Blanchard A."/>
        </authorList>
    </citation>
    <scope>NUCLEOTIDE SEQUENCE [LARGE SCALE GENOMIC DNA]</scope>
    <source>
        <strain>UAB CTIP</strain>
    </source>
</reference>
<keyword id="KW-0067">ATP-binding</keyword>
<keyword id="KW-0963">Cytoplasm</keyword>
<keyword id="KW-0418">Kinase</keyword>
<keyword id="KW-0460">Magnesium</keyword>
<keyword id="KW-0479">Metal-binding</keyword>
<keyword id="KW-0545">Nucleotide biosynthesis</keyword>
<keyword id="KW-0547">Nucleotide-binding</keyword>
<keyword id="KW-1185">Reference proteome</keyword>
<keyword id="KW-0808">Transferase</keyword>
<comment type="function">
    <text evidence="1">Involved in the biosynthesis of the central metabolite phospho-alpha-D-ribosyl-1-pyrophosphate (PRPP) via the transfer of pyrophosphoryl group from ATP to 1-hydroxyl of ribose-5-phosphate (Rib-5-P).</text>
</comment>
<comment type="catalytic activity">
    <reaction evidence="1">
        <text>D-ribose 5-phosphate + ATP = 5-phospho-alpha-D-ribose 1-diphosphate + AMP + H(+)</text>
        <dbReference type="Rhea" id="RHEA:15609"/>
        <dbReference type="ChEBI" id="CHEBI:15378"/>
        <dbReference type="ChEBI" id="CHEBI:30616"/>
        <dbReference type="ChEBI" id="CHEBI:58017"/>
        <dbReference type="ChEBI" id="CHEBI:78346"/>
        <dbReference type="ChEBI" id="CHEBI:456215"/>
        <dbReference type="EC" id="2.7.6.1"/>
    </reaction>
</comment>
<comment type="cofactor">
    <cofactor evidence="1">
        <name>Mg(2+)</name>
        <dbReference type="ChEBI" id="CHEBI:18420"/>
    </cofactor>
    <text evidence="1">Binds 2 Mg(2+) ions per subunit.</text>
</comment>
<comment type="pathway">
    <text evidence="1">Metabolic intermediate biosynthesis; 5-phospho-alpha-D-ribose 1-diphosphate biosynthesis; 5-phospho-alpha-D-ribose 1-diphosphate from D-ribose 5-phosphate (route I): step 1/1.</text>
</comment>
<comment type="subunit">
    <text evidence="1">Homohexamer.</text>
</comment>
<comment type="subcellular location">
    <subcellularLocation>
        <location evidence="1">Cytoplasm</location>
    </subcellularLocation>
</comment>
<comment type="similarity">
    <text evidence="1">Belongs to the ribose-phosphate pyrophosphokinase family. Class I subfamily.</text>
</comment>
<sequence>MNKEKTIIFSMPNTHVLAQEICDELKMKLHSVNKTIFADGEVLLSSKETVRSKDVFIVASTSHPANNNIMDLLIFVDSLKRASAKTINVILSYYGYARQDRKAEGRQPIAAKLLADLLQVAGISRIVVVDLHNPSIQGFFNIPVDDIKAQYILSKEFTIKDEKFTIVSPDHGGTIRARIMAEIISNDVKIAIIDKRRVSTNKTEVLGVIGDINNENAVIVDDIIDTGGTIVNAAEVLKKNGAKKISIVASHGIFSKGFDIFEDADVIDEVIVTNSIDNYELAKKYKKLKIVSLAPFLSKVIRSIMDSKSVSDIYAKYLESK</sequence>
<evidence type="ECO:0000255" key="1">
    <source>
        <dbReference type="HAMAP-Rule" id="MF_00583"/>
    </source>
</evidence>
<gene>
    <name evidence="1" type="primary">prs</name>
    <name type="ordered locus">MYPU_1270</name>
</gene>
<accession>Q98R83</accession>
<proteinExistence type="inferred from homology"/>
<name>KPRS_MYCPU</name>
<protein>
    <recommendedName>
        <fullName evidence="1">Ribose-phosphate pyrophosphokinase</fullName>
        <shortName evidence="1">RPPK</shortName>
        <ecNumber evidence="1">2.7.6.1</ecNumber>
    </recommendedName>
    <alternativeName>
        <fullName evidence="1">5-phospho-D-ribosyl alpha-1-diphosphate synthase</fullName>
    </alternativeName>
    <alternativeName>
        <fullName evidence="1">Phosphoribosyl diphosphate synthase</fullName>
    </alternativeName>
    <alternativeName>
        <fullName evidence="1">Phosphoribosyl pyrophosphate synthase</fullName>
        <shortName evidence="1">P-Rib-PP synthase</shortName>
        <shortName evidence="1">PRPP synthase</shortName>
        <shortName evidence="1">PRPPase</shortName>
    </alternativeName>
</protein>
<organism>
    <name type="scientific">Mycoplasmopsis pulmonis (strain UAB CTIP)</name>
    <name type="common">Mycoplasma pulmonis</name>
    <dbReference type="NCBI Taxonomy" id="272635"/>
    <lineage>
        <taxon>Bacteria</taxon>
        <taxon>Bacillati</taxon>
        <taxon>Mycoplasmatota</taxon>
        <taxon>Mycoplasmoidales</taxon>
        <taxon>Metamycoplasmataceae</taxon>
        <taxon>Mycoplasmopsis</taxon>
    </lineage>
</organism>
<feature type="chain" id="PRO_0000141163" description="Ribose-phosphate pyrophosphokinase">
    <location>
        <begin position="1"/>
        <end position="321"/>
    </location>
</feature>
<feature type="active site" evidence="1">
    <location>
        <position position="195"/>
    </location>
</feature>
<feature type="binding site" evidence="1">
    <location>
        <begin position="39"/>
        <end position="41"/>
    </location>
    <ligand>
        <name>ATP</name>
        <dbReference type="ChEBI" id="CHEBI:30616"/>
    </ligand>
</feature>
<feature type="binding site" evidence="1">
    <location>
        <begin position="98"/>
        <end position="99"/>
    </location>
    <ligand>
        <name>ATP</name>
        <dbReference type="ChEBI" id="CHEBI:30616"/>
    </ligand>
</feature>
<feature type="binding site" evidence="1">
    <location>
        <position position="132"/>
    </location>
    <ligand>
        <name>Mg(2+)</name>
        <dbReference type="ChEBI" id="CHEBI:18420"/>
        <label>1</label>
    </ligand>
</feature>
<feature type="binding site" evidence="1">
    <location>
        <position position="170"/>
    </location>
    <ligand>
        <name>Mg(2+)</name>
        <dbReference type="ChEBI" id="CHEBI:18420"/>
        <label>2</label>
    </ligand>
</feature>
<feature type="binding site" evidence="1">
    <location>
        <position position="197"/>
    </location>
    <ligand>
        <name>D-ribose 5-phosphate</name>
        <dbReference type="ChEBI" id="CHEBI:78346"/>
    </ligand>
</feature>
<feature type="binding site" evidence="1">
    <location>
        <position position="221"/>
    </location>
    <ligand>
        <name>D-ribose 5-phosphate</name>
        <dbReference type="ChEBI" id="CHEBI:78346"/>
    </ligand>
</feature>
<feature type="binding site" evidence="1">
    <location>
        <begin position="225"/>
        <end position="229"/>
    </location>
    <ligand>
        <name>D-ribose 5-phosphate</name>
        <dbReference type="ChEBI" id="CHEBI:78346"/>
    </ligand>
</feature>
<dbReference type="EC" id="2.7.6.1" evidence="1"/>
<dbReference type="EMBL" id="AL445563">
    <property type="protein sequence ID" value="CAC13300.1"/>
    <property type="molecule type" value="Genomic_DNA"/>
</dbReference>
<dbReference type="PIR" id="G90527">
    <property type="entry name" value="G90527"/>
</dbReference>
<dbReference type="RefSeq" id="WP_010924931.1">
    <property type="nucleotide sequence ID" value="NC_002771.1"/>
</dbReference>
<dbReference type="SMR" id="Q98R83"/>
<dbReference type="STRING" id="272635.gene:17576708"/>
<dbReference type="KEGG" id="mpu:MYPU_1270"/>
<dbReference type="eggNOG" id="COG0462">
    <property type="taxonomic scope" value="Bacteria"/>
</dbReference>
<dbReference type="HOGENOM" id="CLU_033546_2_0_14"/>
<dbReference type="BioCyc" id="MPUL272635:G1GT6-126-MONOMER"/>
<dbReference type="UniPathway" id="UPA00087">
    <property type="reaction ID" value="UER00172"/>
</dbReference>
<dbReference type="Proteomes" id="UP000000528">
    <property type="component" value="Chromosome"/>
</dbReference>
<dbReference type="GO" id="GO:0005737">
    <property type="term" value="C:cytoplasm"/>
    <property type="evidence" value="ECO:0007669"/>
    <property type="project" value="UniProtKB-SubCell"/>
</dbReference>
<dbReference type="GO" id="GO:0002189">
    <property type="term" value="C:ribose phosphate diphosphokinase complex"/>
    <property type="evidence" value="ECO:0007669"/>
    <property type="project" value="TreeGrafter"/>
</dbReference>
<dbReference type="GO" id="GO:0005524">
    <property type="term" value="F:ATP binding"/>
    <property type="evidence" value="ECO:0007669"/>
    <property type="project" value="UniProtKB-KW"/>
</dbReference>
<dbReference type="GO" id="GO:0016301">
    <property type="term" value="F:kinase activity"/>
    <property type="evidence" value="ECO:0007669"/>
    <property type="project" value="UniProtKB-KW"/>
</dbReference>
<dbReference type="GO" id="GO:0000287">
    <property type="term" value="F:magnesium ion binding"/>
    <property type="evidence" value="ECO:0007669"/>
    <property type="project" value="UniProtKB-UniRule"/>
</dbReference>
<dbReference type="GO" id="GO:0004749">
    <property type="term" value="F:ribose phosphate diphosphokinase activity"/>
    <property type="evidence" value="ECO:0007669"/>
    <property type="project" value="UniProtKB-UniRule"/>
</dbReference>
<dbReference type="GO" id="GO:0006015">
    <property type="term" value="P:5-phosphoribose 1-diphosphate biosynthetic process"/>
    <property type="evidence" value="ECO:0007669"/>
    <property type="project" value="UniProtKB-UniRule"/>
</dbReference>
<dbReference type="GO" id="GO:0006164">
    <property type="term" value="P:purine nucleotide biosynthetic process"/>
    <property type="evidence" value="ECO:0007669"/>
    <property type="project" value="TreeGrafter"/>
</dbReference>
<dbReference type="GO" id="GO:0009156">
    <property type="term" value="P:ribonucleoside monophosphate biosynthetic process"/>
    <property type="evidence" value="ECO:0007669"/>
    <property type="project" value="InterPro"/>
</dbReference>
<dbReference type="CDD" id="cd06223">
    <property type="entry name" value="PRTases_typeI"/>
    <property type="match status" value="1"/>
</dbReference>
<dbReference type="FunFam" id="3.40.50.2020:FF:000007">
    <property type="entry name" value="Ribose-phosphate pyrophosphokinase"/>
    <property type="match status" value="1"/>
</dbReference>
<dbReference type="Gene3D" id="3.40.50.2020">
    <property type="match status" value="2"/>
</dbReference>
<dbReference type="HAMAP" id="MF_00583_B">
    <property type="entry name" value="RibP_PPkinase_B"/>
    <property type="match status" value="1"/>
</dbReference>
<dbReference type="InterPro" id="IPR000842">
    <property type="entry name" value="PRib_PP_synth_CS"/>
</dbReference>
<dbReference type="InterPro" id="IPR029099">
    <property type="entry name" value="Pribosyltran_N"/>
</dbReference>
<dbReference type="InterPro" id="IPR000836">
    <property type="entry name" value="PRibTrfase_dom"/>
</dbReference>
<dbReference type="InterPro" id="IPR029057">
    <property type="entry name" value="PRTase-like"/>
</dbReference>
<dbReference type="InterPro" id="IPR005946">
    <property type="entry name" value="Rib-P_diPkinase"/>
</dbReference>
<dbReference type="InterPro" id="IPR037515">
    <property type="entry name" value="Rib-P_diPkinase_bac"/>
</dbReference>
<dbReference type="NCBIfam" id="NF002320">
    <property type="entry name" value="PRK01259.1"/>
    <property type="match status" value="1"/>
</dbReference>
<dbReference type="NCBIfam" id="TIGR01251">
    <property type="entry name" value="ribP_PPkin"/>
    <property type="match status" value="1"/>
</dbReference>
<dbReference type="PANTHER" id="PTHR10210">
    <property type="entry name" value="RIBOSE-PHOSPHATE DIPHOSPHOKINASE FAMILY MEMBER"/>
    <property type="match status" value="1"/>
</dbReference>
<dbReference type="PANTHER" id="PTHR10210:SF41">
    <property type="entry name" value="RIBOSE-PHOSPHATE PYROPHOSPHOKINASE 1, CHLOROPLASTIC"/>
    <property type="match status" value="1"/>
</dbReference>
<dbReference type="Pfam" id="PF14572">
    <property type="entry name" value="Pribosyl_synth"/>
    <property type="match status" value="1"/>
</dbReference>
<dbReference type="Pfam" id="PF13793">
    <property type="entry name" value="Pribosyltran_N"/>
    <property type="match status" value="1"/>
</dbReference>
<dbReference type="SMART" id="SM01400">
    <property type="entry name" value="Pribosyltran_N"/>
    <property type="match status" value="1"/>
</dbReference>
<dbReference type="SUPFAM" id="SSF53271">
    <property type="entry name" value="PRTase-like"/>
    <property type="match status" value="1"/>
</dbReference>
<dbReference type="PROSITE" id="PS00114">
    <property type="entry name" value="PRPP_SYNTHASE"/>
    <property type="match status" value="1"/>
</dbReference>